<organism>
    <name type="scientific">Yersinia pestis bv. Antiqua (strain Nepal516)</name>
    <dbReference type="NCBI Taxonomy" id="377628"/>
    <lineage>
        <taxon>Bacteria</taxon>
        <taxon>Pseudomonadati</taxon>
        <taxon>Pseudomonadota</taxon>
        <taxon>Gammaproteobacteria</taxon>
        <taxon>Enterobacterales</taxon>
        <taxon>Yersiniaceae</taxon>
        <taxon>Yersinia</taxon>
    </lineage>
</organism>
<feature type="chain" id="PRO_1000062322" description="UPF0352 protein YPN_2715">
    <location>
        <begin position="1"/>
        <end position="75"/>
    </location>
</feature>
<accession>Q1CG37</accession>
<accession>C4GW77</accession>
<evidence type="ECO:0000255" key="1">
    <source>
        <dbReference type="HAMAP-Rule" id="MF_00816"/>
    </source>
</evidence>
<protein>
    <recommendedName>
        <fullName evidence="1">UPF0352 protein YPN_2715</fullName>
    </recommendedName>
</protein>
<comment type="similarity">
    <text evidence="1">Belongs to the UPF0352 family.</text>
</comment>
<name>Y2715_YERPN</name>
<reference key="1">
    <citation type="journal article" date="2006" name="J. Bacteriol.">
        <title>Complete genome sequence of Yersinia pestis strains Antiqua and Nepal516: evidence of gene reduction in an emerging pathogen.</title>
        <authorList>
            <person name="Chain P.S.G."/>
            <person name="Hu P."/>
            <person name="Malfatti S.A."/>
            <person name="Radnedge L."/>
            <person name="Larimer F."/>
            <person name="Vergez L.M."/>
            <person name="Worsham P."/>
            <person name="Chu M.C."/>
            <person name="Andersen G.L."/>
        </authorList>
    </citation>
    <scope>NUCLEOTIDE SEQUENCE [LARGE SCALE GENOMIC DNA]</scope>
    <source>
        <strain>Nepal516</strain>
    </source>
</reference>
<reference key="2">
    <citation type="submission" date="2009-04" db="EMBL/GenBank/DDBJ databases">
        <title>Yersinia pestis Nepal516A whole genome shotgun sequencing project.</title>
        <authorList>
            <person name="Plunkett G. III"/>
            <person name="Anderson B.D."/>
            <person name="Baumler D.J."/>
            <person name="Burland V."/>
            <person name="Cabot E.L."/>
            <person name="Glasner J.D."/>
            <person name="Mau B."/>
            <person name="Neeno-Eckwall E."/>
            <person name="Perna N.T."/>
            <person name="Munk A.C."/>
            <person name="Tapia R."/>
            <person name="Green L.D."/>
            <person name="Rogers Y.C."/>
            <person name="Detter J.C."/>
            <person name="Bruce D.C."/>
            <person name="Brettin T.S."/>
        </authorList>
    </citation>
    <scope>NUCLEOTIDE SEQUENCE [LARGE SCALE GENOMIC DNA]</scope>
    <source>
        <strain>Nepal516</strain>
    </source>
</reference>
<proteinExistence type="inferred from homology"/>
<sequence>MPQSSRYSDEHVEQLLSELVSVLEKHRTPTDLSLMVLGNMVTNLINTSIAPAQRKVLARSFAEALQASVREDKAH</sequence>
<gene>
    <name type="ordered locus">YPN_2715</name>
    <name type="ORF">YP516_3068</name>
</gene>
<dbReference type="EMBL" id="CP000305">
    <property type="protein sequence ID" value="ABG19043.1"/>
    <property type="molecule type" value="Genomic_DNA"/>
</dbReference>
<dbReference type="EMBL" id="ACNQ01000017">
    <property type="protein sequence ID" value="EEO75177.1"/>
    <property type="molecule type" value="Genomic_DNA"/>
</dbReference>
<dbReference type="RefSeq" id="WP_002208836.1">
    <property type="nucleotide sequence ID" value="NZ_ACNQ01000017.1"/>
</dbReference>
<dbReference type="SMR" id="Q1CG37"/>
<dbReference type="KEGG" id="ypn:YPN_2715"/>
<dbReference type="HOGENOM" id="CLU_175457_0_0_6"/>
<dbReference type="Proteomes" id="UP000008936">
    <property type="component" value="Chromosome"/>
</dbReference>
<dbReference type="Gene3D" id="1.10.3390.10">
    <property type="entry name" value="YejL-like"/>
    <property type="match status" value="1"/>
</dbReference>
<dbReference type="HAMAP" id="MF_00816">
    <property type="entry name" value="UPF0352"/>
    <property type="match status" value="1"/>
</dbReference>
<dbReference type="InterPro" id="IPR009857">
    <property type="entry name" value="UPF0352"/>
</dbReference>
<dbReference type="InterPro" id="IPR023202">
    <property type="entry name" value="YejL_sf"/>
</dbReference>
<dbReference type="NCBIfam" id="NF010242">
    <property type="entry name" value="PRK13689.1"/>
    <property type="match status" value="1"/>
</dbReference>
<dbReference type="Pfam" id="PF07208">
    <property type="entry name" value="DUF1414"/>
    <property type="match status" value="1"/>
</dbReference>
<dbReference type="PIRSF" id="PIRSF006188">
    <property type="entry name" value="UCP006188"/>
    <property type="match status" value="1"/>
</dbReference>
<dbReference type="SUPFAM" id="SSF158651">
    <property type="entry name" value="YejL-like"/>
    <property type="match status" value="1"/>
</dbReference>